<proteinExistence type="inferred from homology"/>
<dbReference type="EMBL" id="CP000108">
    <property type="protein sequence ID" value="ABB28901.1"/>
    <property type="molecule type" value="Genomic_DNA"/>
</dbReference>
<dbReference type="SMR" id="Q3AQ24"/>
<dbReference type="STRING" id="340177.Cag_1649"/>
<dbReference type="KEGG" id="cch:Cag_1649"/>
<dbReference type="eggNOG" id="COG0103">
    <property type="taxonomic scope" value="Bacteria"/>
</dbReference>
<dbReference type="HOGENOM" id="CLU_046483_2_1_10"/>
<dbReference type="OrthoDB" id="9803965at2"/>
<dbReference type="GO" id="GO:0005737">
    <property type="term" value="C:cytoplasm"/>
    <property type="evidence" value="ECO:0007669"/>
    <property type="project" value="UniProtKB-ARBA"/>
</dbReference>
<dbReference type="GO" id="GO:0015935">
    <property type="term" value="C:small ribosomal subunit"/>
    <property type="evidence" value="ECO:0007669"/>
    <property type="project" value="TreeGrafter"/>
</dbReference>
<dbReference type="GO" id="GO:0003723">
    <property type="term" value="F:RNA binding"/>
    <property type="evidence" value="ECO:0007669"/>
    <property type="project" value="TreeGrafter"/>
</dbReference>
<dbReference type="GO" id="GO:0003735">
    <property type="term" value="F:structural constituent of ribosome"/>
    <property type="evidence" value="ECO:0007669"/>
    <property type="project" value="InterPro"/>
</dbReference>
<dbReference type="GO" id="GO:0006412">
    <property type="term" value="P:translation"/>
    <property type="evidence" value="ECO:0007669"/>
    <property type="project" value="UniProtKB-UniRule"/>
</dbReference>
<dbReference type="FunFam" id="3.30.230.10:FF:000001">
    <property type="entry name" value="30S ribosomal protein S9"/>
    <property type="match status" value="1"/>
</dbReference>
<dbReference type="Gene3D" id="3.30.230.10">
    <property type="match status" value="1"/>
</dbReference>
<dbReference type="HAMAP" id="MF_00532_B">
    <property type="entry name" value="Ribosomal_uS9_B"/>
    <property type="match status" value="1"/>
</dbReference>
<dbReference type="InterPro" id="IPR020568">
    <property type="entry name" value="Ribosomal_Su5_D2-typ_SF"/>
</dbReference>
<dbReference type="InterPro" id="IPR000754">
    <property type="entry name" value="Ribosomal_uS9"/>
</dbReference>
<dbReference type="InterPro" id="IPR023035">
    <property type="entry name" value="Ribosomal_uS9_bac/plastid"/>
</dbReference>
<dbReference type="InterPro" id="IPR020574">
    <property type="entry name" value="Ribosomal_uS9_CS"/>
</dbReference>
<dbReference type="InterPro" id="IPR014721">
    <property type="entry name" value="Ribsml_uS5_D2-typ_fold_subgr"/>
</dbReference>
<dbReference type="NCBIfam" id="NF001099">
    <property type="entry name" value="PRK00132.1"/>
    <property type="match status" value="1"/>
</dbReference>
<dbReference type="PANTHER" id="PTHR21569">
    <property type="entry name" value="RIBOSOMAL PROTEIN S9"/>
    <property type="match status" value="1"/>
</dbReference>
<dbReference type="PANTHER" id="PTHR21569:SF1">
    <property type="entry name" value="SMALL RIBOSOMAL SUBUNIT PROTEIN US9M"/>
    <property type="match status" value="1"/>
</dbReference>
<dbReference type="Pfam" id="PF00380">
    <property type="entry name" value="Ribosomal_S9"/>
    <property type="match status" value="1"/>
</dbReference>
<dbReference type="SUPFAM" id="SSF54211">
    <property type="entry name" value="Ribosomal protein S5 domain 2-like"/>
    <property type="match status" value="1"/>
</dbReference>
<dbReference type="PROSITE" id="PS00360">
    <property type="entry name" value="RIBOSOMAL_S9"/>
    <property type="match status" value="1"/>
</dbReference>
<sequence>MKEVIDTVGRRKTSVARAFLTPGKGTVTVNKRPVEEYFKDEFKRQQALRPLTLCEKAEEFDVKINVQGGGLSGQSGAVSLAIARALTESDEALRAVLRTERLLTRDPRMVERKKFGRKKARKRFQFSKR</sequence>
<keyword id="KW-0687">Ribonucleoprotein</keyword>
<keyword id="KW-0689">Ribosomal protein</keyword>
<evidence type="ECO:0000255" key="1">
    <source>
        <dbReference type="HAMAP-Rule" id="MF_00532"/>
    </source>
</evidence>
<evidence type="ECO:0000305" key="2"/>
<organism>
    <name type="scientific">Chlorobium chlorochromatii (strain CaD3)</name>
    <dbReference type="NCBI Taxonomy" id="340177"/>
    <lineage>
        <taxon>Bacteria</taxon>
        <taxon>Pseudomonadati</taxon>
        <taxon>Chlorobiota</taxon>
        <taxon>Chlorobiia</taxon>
        <taxon>Chlorobiales</taxon>
        <taxon>Chlorobiaceae</taxon>
        <taxon>Chlorobium/Pelodictyon group</taxon>
        <taxon>Chlorobium</taxon>
    </lineage>
</organism>
<comment type="similarity">
    <text evidence="1">Belongs to the universal ribosomal protein uS9 family.</text>
</comment>
<name>RS9_CHLCH</name>
<reference key="1">
    <citation type="submission" date="2005-08" db="EMBL/GenBank/DDBJ databases">
        <title>Complete sequence of Chlorobium chlorochromatii CaD3.</title>
        <authorList>
            <consortium name="US DOE Joint Genome Institute"/>
            <person name="Copeland A."/>
            <person name="Lucas S."/>
            <person name="Lapidus A."/>
            <person name="Barry K."/>
            <person name="Detter J.C."/>
            <person name="Glavina T."/>
            <person name="Hammon N."/>
            <person name="Israni S."/>
            <person name="Pitluck S."/>
            <person name="Bryant D."/>
            <person name="Schmutz J."/>
            <person name="Larimer F."/>
            <person name="Land M."/>
            <person name="Kyrpides N."/>
            <person name="Ivanova N."/>
            <person name="Richardson P."/>
        </authorList>
    </citation>
    <scope>NUCLEOTIDE SEQUENCE [LARGE SCALE GENOMIC DNA]</scope>
    <source>
        <strain>CaD3</strain>
    </source>
</reference>
<accession>Q3AQ24</accession>
<protein>
    <recommendedName>
        <fullName evidence="1">Small ribosomal subunit protein uS9</fullName>
    </recommendedName>
    <alternativeName>
        <fullName evidence="2">30S ribosomal protein S9</fullName>
    </alternativeName>
</protein>
<feature type="chain" id="PRO_1000128099" description="Small ribosomal subunit protein uS9">
    <location>
        <begin position="1"/>
        <end position="129"/>
    </location>
</feature>
<gene>
    <name evidence="1" type="primary">rpsI</name>
    <name type="ordered locus">Cag_1649</name>
</gene>